<keyword id="KW-0056">Arginine metabolism</keyword>
<keyword id="KW-0378">Hydrolase</keyword>
<evidence type="ECO:0000255" key="1">
    <source>
        <dbReference type="HAMAP-Rule" id="MF_01172"/>
    </source>
</evidence>
<gene>
    <name evidence="1" type="primary">astB</name>
    <name type="ordered locus">ECSE_1915</name>
</gene>
<reference key="1">
    <citation type="journal article" date="2008" name="DNA Res.">
        <title>Complete genome sequence and comparative analysis of the wild-type commensal Escherichia coli strain SE11 isolated from a healthy adult.</title>
        <authorList>
            <person name="Oshima K."/>
            <person name="Toh H."/>
            <person name="Ogura Y."/>
            <person name="Sasamoto H."/>
            <person name="Morita H."/>
            <person name="Park S.-H."/>
            <person name="Ooka T."/>
            <person name="Iyoda S."/>
            <person name="Taylor T.D."/>
            <person name="Hayashi T."/>
            <person name="Itoh K."/>
            <person name="Hattori M."/>
        </authorList>
    </citation>
    <scope>NUCLEOTIDE SEQUENCE [LARGE SCALE GENOMIC DNA]</scope>
    <source>
        <strain>SE11</strain>
    </source>
</reference>
<organism>
    <name type="scientific">Escherichia coli (strain SE11)</name>
    <dbReference type="NCBI Taxonomy" id="409438"/>
    <lineage>
        <taxon>Bacteria</taxon>
        <taxon>Pseudomonadati</taxon>
        <taxon>Pseudomonadota</taxon>
        <taxon>Gammaproteobacteria</taxon>
        <taxon>Enterobacterales</taxon>
        <taxon>Enterobacteriaceae</taxon>
        <taxon>Escherichia</taxon>
    </lineage>
</organism>
<comment type="function">
    <text evidence="1">Catalyzes the hydrolysis of N(2)-succinylarginine into N(2)-succinylornithine, ammonia and CO(2).</text>
</comment>
<comment type="catalytic activity">
    <reaction evidence="1">
        <text>N(2)-succinyl-L-arginine + 2 H2O + 2 H(+) = N(2)-succinyl-L-ornithine + 2 NH4(+) + CO2</text>
        <dbReference type="Rhea" id="RHEA:19533"/>
        <dbReference type="ChEBI" id="CHEBI:15377"/>
        <dbReference type="ChEBI" id="CHEBI:15378"/>
        <dbReference type="ChEBI" id="CHEBI:16526"/>
        <dbReference type="ChEBI" id="CHEBI:28938"/>
        <dbReference type="ChEBI" id="CHEBI:58241"/>
        <dbReference type="ChEBI" id="CHEBI:58514"/>
        <dbReference type="EC" id="3.5.3.23"/>
    </reaction>
</comment>
<comment type="pathway">
    <text evidence="1">Amino-acid degradation; L-arginine degradation via AST pathway; L-glutamate and succinate from L-arginine: step 2/5.</text>
</comment>
<comment type="subunit">
    <text evidence="1">Homodimer.</text>
</comment>
<comment type="similarity">
    <text evidence="1">Belongs to the succinylarginine dihydrolase family.</text>
</comment>
<protein>
    <recommendedName>
        <fullName evidence="1">N-succinylarginine dihydrolase</fullName>
        <ecNumber evidence="1">3.5.3.23</ecNumber>
    </recommendedName>
</protein>
<dbReference type="EC" id="3.5.3.23" evidence="1"/>
<dbReference type="EMBL" id="AP009240">
    <property type="protein sequence ID" value="BAG77439.1"/>
    <property type="molecule type" value="Genomic_DNA"/>
</dbReference>
<dbReference type="RefSeq" id="WP_000995007.1">
    <property type="nucleotide sequence ID" value="NC_011415.1"/>
</dbReference>
<dbReference type="SMR" id="B6IBG5"/>
<dbReference type="KEGG" id="ecy:ECSE_1915"/>
<dbReference type="HOGENOM" id="CLU_053835_0_0_6"/>
<dbReference type="UniPathway" id="UPA00185">
    <property type="reaction ID" value="UER00280"/>
</dbReference>
<dbReference type="Proteomes" id="UP000008199">
    <property type="component" value="Chromosome"/>
</dbReference>
<dbReference type="GO" id="GO:0009015">
    <property type="term" value="F:N-succinylarginine dihydrolase activity"/>
    <property type="evidence" value="ECO:0007669"/>
    <property type="project" value="UniProtKB-UniRule"/>
</dbReference>
<dbReference type="GO" id="GO:0019544">
    <property type="term" value="P:arginine catabolic process to glutamate"/>
    <property type="evidence" value="ECO:0007669"/>
    <property type="project" value="UniProtKB-UniRule"/>
</dbReference>
<dbReference type="GO" id="GO:0019545">
    <property type="term" value="P:arginine catabolic process to succinate"/>
    <property type="evidence" value="ECO:0007669"/>
    <property type="project" value="UniProtKB-UniRule"/>
</dbReference>
<dbReference type="FunFam" id="3.75.10.20:FF:000001">
    <property type="entry name" value="N-succinylarginine dihydrolase"/>
    <property type="match status" value="1"/>
</dbReference>
<dbReference type="Gene3D" id="3.75.10.20">
    <property type="entry name" value="Succinylarginine dihydrolase"/>
    <property type="match status" value="1"/>
</dbReference>
<dbReference type="HAMAP" id="MF_01172">
    <property type="entry name" value="AstB"/>
    <property type="match status" value="1"/>
</dbReference>
<dbReference type="InterPro" id="IPR037031">
    <property type="entry name" value="AstB_sf"/>
</dbReference>
<dbReference type="InterPro" id="IPR007079">
    <property type="entry name" value="SuccinylArg_d-Hdrlase_AstB"/>
</dbReference>
<dbReference type="NCBIfam" id="TIGR03241">
    <property type="entry name" value="arg_catab_astB"/>
    <property type="match status" value="1"/>
</dbReference>
<dbReference type="NCBIfam" id="NF009789">
    <property type="entry name" value="PRK13281.1"/>
    <property type="match status" value="1"/>
</dbReference>
<dbReference type="PANTHER" id="PTHR30420">
    <property type="entry name" value="N-SUCCINYLARGININE DIHYDROLASE"/>
    <property type="match status" value="1"/>
</dbReference>
<dbReference type="PANTHER" id="PTHR30420:SF2">
    <property type="entry name" value="N-SUCCINYLARGININE DIHYDROLASE"/>
    <property type="match status" value="1"/>
</dbReference>
<dbReference type="Pfam" id="PF04996">
    <property type="entry name" value="AstB"/>
    <property type="match status" value="1"/>
</dbReference>
<dbReference type="SUPFAM" id="SSF55909">
    <property type="entry name" value="Pentein"/>
    <property type="match status" value="1"/>
</dbReference>
<proteinExistence type="inferred from homology"/>
<accession>B6IBG5</accession>
<feature type="chain" id="PRO_1000138015" description="N-succinylarginine dihydrolase">
    <location>
        <begin position="1"/>
        <end position="447"/>
    </location>
</feature>
<feature type="active site" evidence="1">
    <location>
        <position position="174"/>
    </location>
</feature>
<feature type="active site" evidence="1">
    <location>
        <position position="248"/>
    </location>
</feature>
<feature type="active site" description="Nucleophile" evidence="1">
    <location>
        <position position="365"/>
    </location>
</feature>
<feature type="binding site" evidence="1">
    <location>
        <begin position="19"/>
        <end position="28"/>
    </location>
    <ligand>
        <name>substrate</name>
    </ligand>
</feature>
<feature type="binding site" evidence="1">
    <location>
        <position position="110"/>
    </location>
    <ligand>
        <name>substrate</name>
    </ligand>
</feature>
<feature type="binding site" evidence="1">
    <location>
        <begin position="137"/>
        <end position="138"/>
    </location>
    <ligand>
        <name>substrate</name>
    </ligand>
</feature>
<feature type="binding site" evidence="1">
    <location>
        <position position="212"/>
    </location>
    <ligand>
        <name>substrate</name>
    </ligand>
</feature>
<feature type="binding site" evidence="1">
    <location>
        <position position="250"/>
    </location>
    <ligand>
        <name>substrate</name>
    </ligand>
</feature>
<feature type="binding site" evidence="1">
    <location>
        <position position="359"/>
    </location>
    <ligand>
        <name>substrate</name>
    </ligand>
</feature>
<sequence>MNAWEVNFDGLVGLTHHYAGLSFGNEASTRHRFQVSNPRQAAKQGLLKMKALADAGFPQAVIPPHERPFIPVLRQLGFSGSDEQVLEKVARQAPHWLSSVSSASPMWVANAATIAPSADTLDGKVHLTVANLNNKFHRSLEAHVTESLLKAIFNDEEKFSVHSALPQVALLGDEGAANHNRLGGHYGEPGMQLFVYGREEGNDTRPSRYPARQTREASEAVARLNQVNPQQVIFAQQNPDVIDQGVFHNDVIAVSNRQVLFCHQQAFARQSQLLANLRARVNGFMAIEVPATQVSVSDAVSTYLFNSQLLSRDDGSMMLVLPQECREHAGVWGYLNELLAADNPISELKVFDLRESMANGGGPACLRLRVVLTEEERRAVNPAVMMNDTLFNALNDWVDRYYRDRLTAADLADPQLLRGGREALDVLSQLLNLGSVYPFQREGGGNG</sequence>
<name>ASTB_ECOSE</name>